<gene>
    <name evidence="1" type="primary">pfdA</name>
    <name type="ordered locus">Mlab_1477</name>
</gene>
<reference key="1">
    <citation type="journal article" date="2009" name="Stand. Genomic Sci.">
        <title>Complete genome sequence of Methanocorpusculum labreanum type strain Z.</title>
        <authorList>
            <person name="Anderson I.J."/>
            <person name="Sieprawska-Lupa M."/>
            <person name="Goltsman E."/>
            <person name="Lapidus A."/>
            <person name="Copeland A."/>
            <person name="Glavina Del Rio T."/>
            <person name="Tice H."/>
            <person name="Dalin E."/>
            <person name="Barry K."/>
            <person name="Pitluck S."/>
            <person name="Hauser L."/>
            <person name="Land M."/>
            <person name="Lucas S."/>
            <person name="Richardson P."/>
            <person name="Whitman W.B."/>
            <person name="Kyrpides N.C."/>
        </authorList>
    </citation>
    <scope>NUCLEOTIDE SEQUENCE [LARGE SCALE GENOMIC DNA]</scope>
    <source>
        <strain>ATCC 43576 / DSM 4855 / Z</strain>
    </source>
</reference>
<sequence>MASNTDQASLEQEVRSLQAYANEYSQQFELLTQQLRFIESARGEALASTESLEAFSGLEGDVPTLLNLGGGISVHAIVTDTKKILVGIGAGITVEKPVEEAITFLHDRVTEMDASAKRLSESLGKLQEQMRAVEQRMQEIYSQTQHR</sequence>
<comment type="function">
    <text evidence="1">Molecular chaperone capable of stabilizing a range of proteins. Seems to fulfill an ATP-independent, HSP70-like function in archaeal de novo protein folding.</text>
</comment>
<comment type="subunit">
    <text evidence="1">Heterohexamer of two alpha and four beta subunits.</text>
</comment>
<comment type="subcellular location">
    <subcellularLocation>
        <location evidence="1">Cytoplasm</location>
    </subcellularLocation>
</comment>
<comment type="similarity">
    <text evidence="1">Belongs to the prefoldin alpha subunit family.</text>
</comment>
<evidence type="ECO:0000255" key="1">
    <source>
        <dbReference type="HAMAP-Rule" id="MF_00308"/>
    </source>
</evidence>
<protein>
    <recommendedName>
        <fullName evidence="1">Prefoldin subunit alpha</fullName>
    </recommendedName>
    <alternativeName>
        <fullName evidence="1">GimC subunit alpha</fullName>
    </alternativeName>
</protein>
<keyword id="KW-0143">Chaperone</keyword>
<keyword id="KW-0963">Cytoplasm</keyword>
<keyword id="KW-1185">Reference proteome</keyword>
<name>PFDA_METLZ</name>
<organism>
    <name type="scientific">Methanocorpusculum labreanum (strain ATCC 43576 / DSM 4855 / Z)</name>
    <dbReference type="NCBI Taxonomy" id="410358"/>
    <lineage>
        <taxon>Archaea</taxon>
        <taxon>Methanobacteriati</taxon>
        <taxon>Methanobacteriota</taxon>
        <taxon>Stenosarchaea group</taxon>
        <taxon>Methanomicrobia</taxon>
        <taxon>Methanomicrobiales</taxon>
        <taxon>Methanocorpusculaceae</taxon>
        <taxon>Methanocorpusculum</taxon>
    </lineage>
</organism>
<feature type="chain" id="PRO_0000322253" description="Prefoldin subunit alpha">
    <location>
        <begin position="1"/>
        <end position="147"/>
    </location>
</feature>
<proteinExistence type="inferred from homology"/>
<accession>A2STI6</accession>
<dbReference type="EMBL" id="CP000559">
    <property type="protein sequence ID" value="ABN07642.1"/>
    <property type="molecule type" value="Genomic_DNA"/>
</dbReference>
<dbReference type="RefSeq" id="WP_011833845.1">
    <property type="nucleotide sequence ID" value="NC_008942.1"/>
</dbReference>
<dbReference type="SMR" id="A2STI6"/>
<dbReference type="STRING" id="410358.Mlab_1477"/>
<dbReference type="GeneID" id="4795099"/>
<dbReference type="KEGG" id="mla:Mlab_1477"/>
<dbReference type="eggNOG" id="arCOG01341">
    <property type="taxonomic scope" value="Archaea"/>
</dbReference>
<dbReference type="HOGENOM" id="CLU_091867_1_3_2"/>
<dbReference type="OrthoDB" id="373619at2157"/>
<dbReference type="Proteomes" id="UP000000365">
    <property type="component" value="Chromosome"/>
</dbReference>
<dbReference type="GO" id="GO:0005737">
    <property type="term" value="C:cytoplasm"/>
    <property type="evidence" value="ECO:0007669"/>
    <property type="project" value="UniProtKB-SubCell"/>
</dbReference>
<dbReference type="GO" id="GO:0016272">
    <property type="term" value="C:prefoldin complex"/>
    <property type="evidence" value="ECO:0007669"/>
    <property type="project" value="UniProtKB-UniRule"/>
</dbReference>
<dbReference type="GO" id="GO:0051082">
    <property type="term" value="F:unfolded protein binding"/>
    <property type="evidence" value="ECO:0007669"/>
    <property type="project" value="UniProtKB-UniRule"/>
</dbReference>
<dbReference type="GO" id="GO:0006457">
    <property type="term" value="P:protein folding"/>
    <property type="evidence" value="ECO:0007669"/>
    <property type="project" value="UniProtKB-UniRule"/>
</dbReference>
<dbReference type="CDD" id="cd23160">
    <property type="entry name" value="Prefoldin_alpha_GimC"/>
    <property type="match status" value="1"/>
</dbReference>
<dbReference type="Gene3D" id="1.10.287.370">
    <property type="match status" value="1"/>
</dbReference>
<dbReference type="HAMAP" id="MF_00308">
    <property type="entry name" value="PfdA"/>
    <property type="match status" value="1"/>
</dbReference>
<dbReference type="InterPro" id="IPR011599">
    <property type="entry name" value="PFD_alpha_archaea"/>
</dbReference>
<dbReference type="InterPro" id="IPR009053">
    <property type="entry name" value="Prefoldin"/>
</dbReference>
<dbReference type="InterPro" id="IPR004127">
    <property type="entry name" value="Prefoldin_subunit_alpha"/>
</dbReference>
<dbReference type="NCBIfam" id="TIGR00293">
    <property type="entry name" value="prefoldin subunit alpha"/>
    <property type="match status" value="1"/>
</dbReference>
<dbReference type="PANTHER" id="PTHR12674">
    <property type="entry name" value="PREFOLDIN SUBUNIT 5"/>
    <property type="match status" value="1"/>
</dbReference>
<dbReference type="PANTHER" id="PTHR12674:SF2">
    <property type="entry name" value="PREFOLDIN SUBUNIT 5"/>
    <property type="match status" value="1"/>
</dbReference>
<dbReference type="Pfam" id="PF02996">
    <property type="entry name" value="Prefoldin"/>
    <property type="match status" value="1"/>
</dbReference>
<dbReference type="SUPFAM" id="SSF46579">
    <property type="entry name" value="Prefoldin"/>
    <property type="match status" value="1"/>
</dbReference>